<name>RL23_LISMO</name>
<sequence length="94" mass="10916">MDARDIIKRPVVTEESTSILDDKKYTFEVDTRATKTQVKYAVEEIFDVKVAKVNVMNYKGKLKRMGRYAGYTNKRRKAIVTVTADSKEIQFFEV</sequence>
<gene>
    <name evidence="1" type="primary">rplW</name>
    <name type="ordered locus">lmo2630</name>
</gene>
<evidence type="ECO:0000255" key="1">
    <source>
        <dbReference type="HAMAP-Rule" id="MF_01369"/>
    </source>
</evidence>
<evidence type="ECO:0000305" key="2"/>
<evidence type="ECO:0007829" key="3">
    <source>
        <dbReference type="PDB" id="8A57"/>
    </source>
</evidence>
<dbReference type="EMBL" id="AL591983">
    <property type="protein sequence ID" value="CAD00708.1"/>
    <property type="molecule type" value="Genomic_DNA"/>
</dbReference>
<dbReference type="PIR" id="AF1403">
    <property type="entry name" value="AF1403"/>
</dbReference>
<dbReference type="RefSeq" id="NP_466153.1">
    <property type="nucleotide sequence ID" value="NC_003210.1"/>
</dbReference>
<dbReference type="RefSeq" id="WP_003720948.1">
    <property type="nucleotide sequence ID" value="NZ_CP149495.1"/>
</dbReference>
<dbReference type="PDB" id="7NHN">
    <property type="method" value="EM"/>
    <property type="resolution" value="2.90 A"/>
    <property type="chains" value="W=1-94"/>
</dbReference>
<dbReference type="PDB" id="8A57">
    <property type="method" value="EM"/>
    <property type="resolution" value="2.30 A"/>
    <property type="chains" value="W=1-94"/>
</dbReference>
<dbReference type="PDB" id="8A5I">
    <property type="method" value="EM"/>
    <property type="resolution" value="2.30 A"/>
    <property type="chains" value="W=1-94"/>
</dbReference>
<dbReference type="PDB" id="8A63">
    <property type="method" value="EM"/>
    <property type="resolution" value="3.10 A"/>
    <property type="chains" value="W=1-94"/>
</dbReference>
<dbReference type="PDBsum" id="7NHN"/>
<dbReference type="PDBsum" id="8A57"/>
<dbReference type="PDBsum" id="8A5I"/>
<dbReference type="PDBsum" id="8A63"/>
<dbReference type="EMDB" id="EMD-12334"/>
<dbReference type="EMDB" id="EMD-15161"/>
<dbReference type="EMDB" id="EMD-15175"/>
<dbReference type="EMDB" id="EMD-15204"/>
<dbReference type="SMR" id="Q8Y441"/>
<dbReference type="STRING" id="169963.gene:17595348"/>
<dbReference type="PaxDb" id="169963-lmo2630"/>
<dbReference type="EnsemblBacteria" id="CAD00708">
    <property type="protein sequence ID" value="CAD00708"/>
    <property type="gene ID" value="CAD00708"/>
</dbReference>
<dbReference type="GeneID" id="32488625"/>
<dbReference type="GeneID" id="984375"/>
<dbReference type="KEGG" id="lmo:lmo2630"/>
<dbReference type="PATRIC" id="fig|169963.11.peg.2694"/>
<dbReference type="eggNOG" id="COG0089">
    <property type="taxonomic scope" value="Bacteria"/>
</dbReference>
<dbReference type="HOGENOM" id="CLU_037562_3_2_9"/>
<dbReference type="OrthoDB" id="9793353at2"/>
<dbReference type="PhylomeDB" id="Q8Y441"/>
<dbReference type="BioCyc" id="LMON169963:LMO2630-MONOMER"/>
<dbReference type="Proteomes" id="UP000000817">
    <property type="component" value="Chromosome"/>
</dbReference>
<dbReference type="GO" id="GO:0022625">
    <property type="term" value="C:cytosolic large ribosomal subunit"/>
    <property type="evidence" value="ECO:0000318"/>
    <property type="project" value="GO_Central"/>
</dbReference>
<dbReference type="GO" id="GO:0019843">
    <property type="term" value="F:rRNA binding"/>
    <property type="evidence" value="ECO:0007669"/>
    <property type="project" value="UniProtKB-UniRule"/>
</dbReference>
<dbReference type="GO" id="GO:0003735">
    <property type="term" value="F:structural constituent of ribosome"/>
    <property type="evidence" value="ECO:0000318"/>
    <property type="project" value="GO_Central"/>
</dbReference>
<dbReference type="GO" id="GO:0006412">
    <property type="term" value="P:translation"/>
    <property type="evidence" value="ECO:0007669"/>
    <property type="project" value="UniProtKB-UniRule"/>
</dbReference>
<dbReference type="FunFam" id="3.30.70.330:FF:000001">
    <property type="entry name" value="50S ribosomal protein L23"/>
    <property type="match status" value="1"/>
</dbReference>
<dbReference type="Gene3D" id="3.30.70.330">
    <property type="match status" value="1"/>
</dbReference>
<dbReference type="HAMAP" id="MF_01369_B">
    <property type="entry name" value="Ribosomal_uL23_B"/>
    <property type="match status" value="1"/>
</dbReference>
<dbReference type="InterPro" id="IPR012677">
    <property type="entry name" value="Nucleotide-bd_a/b_plait_sf"/>
</dbReference>
<dbReference type="InterPro" id="IPR013025">
    <property type="entry name" value="Ribosomal_uL23-like"/>
</dbReference>
<dbReference type="InterPro" id="IPR012678">
    <property type="entry name" value="Ribosomal_uL23/eL15/eS24_sf"/>
</dbReference>
<dbReference type="NCBIfam" id="NF004363">
    <property type="entry name" value="PRK05738.2-4"/>
    <property type="match status" value="1"/>
</dbReference>
<dbReference type="PANTHER" id="PTHR11620">
    <property type="entry name" value="60S RIBOSOMAL PROTEIN L23A"/>
    <property type="match status" value="1"/>
</dbReference>
<dbReference type="Pfam" id="PF00276">
    <property type="entry name" value="Ribosomal_L23"/>
    <property type="match status" value="1"/>
</dbReference>
<dbReference type="SUPFAM" id="SSF54189">
    <property type="entry name" value="Ribosomal proteins S24e, L23 and L15e"/>
    <property type="match status" value="1"/>
</dbReference>
<feature type="chain" id="PRO_1000068103" description="Large ribosomal subunit protein uL23">
    <location>
        <begin position="1"/>
        <end position="94"/>
    </location>
</feature>
<feature type="turn" evidence="3">
    <location>
        <begin position="4"/>
        <end position="6"/>
    </location>
</feature>
<feature type="strand" evidence="3">
    <location>
        <begin position="7"/>
        <end position="10"/>
    </location>
</feature>
<feature type="helix" evidence="3">
    <location>
        <begin position="14"/>
        <end position="17"/>
    </location>
</feature>
<feature type="turn" evidence="3">
    <location>
        <begin position="18"/>
        <end position="23"/>
    </location>
</feature>
<feature type="strand" evidence="3">
    <location>
        <begin position="24"/>
        <end position="29"/>
    </location>
</feature>
<feature type="helix" evidence="3">
    <location>
        <begin position="35"/>
        <end position="46"/>
    </location>
</feature>
<feature type="strand" evidence="3">
    <location>
        <begin position="50"/>
        <end position="58"/>
    </location>
</feature>
<feature type="strand" evidence="3">
    <location>
        <begin position="62"/>
        <end position="65"/>
    </location>
</feature>
<feature type="strand" evidence="3">
    <location>
        <begin position="68"/>
        <end position="71"/>
    </location>
</feature>
<feature type="strand" evidence="3">
    <location>
        <begin position="75"/>
        <end position="82"/>
    </location>
</feature>
<feature type="strand" evidence="3">
    <location>
        <begin position="84"/>
        <end position="86"/>
    </location>
</feature>
<accession>Q8Y441</accession>
<reference key="1">
    <citation type="journal article" date="2001" name="Science">
        <title>Comparative genomics of Listeria species.</title>
        <authorList>
            <person name="Glaser P."/>
            <person name="Frangeul L."/>
            <person name="Buchrieser C."/>
            <person name="Rusniok C."/>
            <person name="Amend A."/>
            <person name="Baquero F."/>
            <person name="Berche P."/>
            <person name="Bloecker H."/>
            <person name="Brandt P."/>
            <person name="Chakraborty T."/>
            <person name="Charbit A."/>
            <person name="Chetouani F."/>
            <person name="Couve E."/>
            <person name="de Daruvar A."/>
            <person name="Dehoux P."/>
            <person name="Domann E."/>
            <person name="Dominguez-Bernal G."/>
            <person name="Duchaud E."/>
            <person name="Durant L."/>
            <person name="Dussurget O."/>
            <person name="Entian K.-D."/>
            <person name="Fsihi H."/>
            <person name="Garcia-del Portillo F."/>
            <person name="Garrido P."/>
            <person name="Gautier L."/>
            <person name="Goebel W."/>
            <person name="Gomez-Lopez N."/>
            <person name="Hain T."/>
            <person name="Hauf J."/>
            <person name="Jackson D."/>
            <person name="Jones L.-M."/>
            <person name="Kaerst U."/>
            <person name="Kreft J."/>
            <person name="Kuhn M."/>
            <person name="Kunst F."/>
            <person name="Kurapkat G."/>
            <person name="Madueno E."/>
            <person name="Maitournam A."/>
            <person name="Mata Vicente J."/>
            <person name="Ng E."/>
            <person name="Nedjari H."/>
            <person name="Nordsiek G."/>
            <person name="Novella S."/>
            <person name="de Pablos B."/>
            <person name="Perez-Diaz J.-C."/>
            <person name="Purcell R."/>
            <person name="Remmel B."/>
            <person name="Rose M."/>
            <person name="Schlueter T."/>
            <person name="Simoes N."/>
            <person name="Tierrez A."/>
            <person name="Vazquez-Boland J.-A."/>
            <person name="Voss H."/>
            <person name="Wehland J."/>
            <person name="Cossart P."/>
        </authorList>
    </citation>
    <scope>NUCLEOTIDE SEQUENCE [LARGE SCALE GENOMIC DNA]</scope>
    <source>
        <strain>ATCC BAA-679 / EGD-e</strain>
    </source>
</reference>
<comment type="function">
    <text evidence="1">One of the early assembly proteins it binds 23S rRNA. One of the proteins that surrounds the polypeptide exit tunnel on the outside of the ribosome. Forms the main docking site for trigger factor binding to the ribosome.</text>
</comment>
<comment type="subunit">
    <text evidence="1">Part of the 50S ribosomal subunit. Contacts protein L29, and trigger factor when it is bound to the ribosome.</text>
</comment>
<comment type="similarity">
    <text evidence="1">Belongs to the universal ribosomal protein uL23 family.</text>
</comment>
<organism>
    <name type="scientific">Listeria monocytogenes serovar 1/2a (strain ATCC BAA-679 / EGD-e)</name>
    <dbReference type="NCBI Taxonomy" id="169963"/>
    <lineage>
        <taxon>Bacteria</taxon>
        <taxon>Bacillati</taxon>
        <taxon>Bacillota</taxon>
        <taxon>Bacilli</taxon>
        <taxon>Bacillales</taxon>
        <taxon>Listeriaceae</taxon>
        <taxon>Listeria</taxon>
    </lineage>
</organism>
<keyword id="KW-0002">3D-structure</keyword>
<keyword id="KW-1185">Reference proteome</keyword>
<keyword id="KW-0687">Ribonucleoprotein</keyword>
<keyword id="KW-0689">Ribosomal protein</keyword>
<keyword id="KW-0694">RNA-binding</keyword>
<keyword id="KW-0699">rRNA-binding</keyword>
<protein>
    <recommendedName>
        <fullName evidence="1">Large ribosomal subunit protein uL23</fullName>
    </recommendedName>
    <alternativeName>
        <fullName evidence="2">50S ribosomal protein L23</fullName>
    </alternativeName>
</protein>
<proteinExistence type="evidence at protein level"/>